<keyword id="KW-0963">Cytoplasm</keyword>
<keyword id="KW-0472">Membrane</keyword>
<keyword id="KW-0539">Nucleus</keyword>
<keyword id="KW-0560">Oxidoreductase</keyword>
<keyword id="KW-0653">Protein transport</keyword>
<keyword id="KW-1185">Reference proteome</keyword>
<keyword id="KW-0711">Selenium</keyword>
<keyword id="KW-0813">Transport</keyword>
<gene>
    <name type="primary">selenbp1</name>
</gene>
<feature type="chain" id="PRO_0000289067" description="Methanethiol oxidase">
    <location>
        <begin position="1"/>
        <end position="472"/>
    </location>
</feature>
<sequence length="472" mass="52660">MAKCGSCGPGYKTPLDAMKGPREEILYLPCIYRNTGINKPDYLATVDVNPKSPKYSQVIHRLPMPNTNDELHHSGWNTCSSCYGDASKVRNKLILPCLISSRIYVVDVGTDPRAPRIHKTVEPYEVFWKCGLANLHTSHCLGCGEIMISSIGDPYGNGKGGFVLLDGETFEVKGNWEAEGEAAPFGYDFWYQPRHNVMISTEWGAPKAFALGFKMEEVQAGMYGHSLNVWDWTEHRRIQTIDLGEDGLIPLEIRFLHDPDAAQGLVGCALSSTVFRFYKEKDGKWAAEKVIKVPSKKVEGWALPEMPGLITDILISLDDRFLYFSNWLHGDIRQYDITDPRNPKLVGQIFLGGSILRGGPVTVLEDKDLECQPDPVIVKGKKVPGGPQMIQLSLDGKRLYVTNSLYSKWDKQFYPDMIKEGSVMLQIDVDTEKGGLKLNPNFLVDFGKEPGGPVLAHELRYPGGDCSSDIWV</sequence>
<accession>Q569D5</accession>
<reference key="1">
    <citation type="submission" date="2005-04" db="EMBL/GenBank/DDBJ databases">
        <authorList>
            <consortium name="NIH - Xenopus Gene Collection (XGC) project"/>
        </authorList>
    </citation>
    <scope>NUCLEOTIDE SEQUENCE [LARGE SCALE MRNA]</scope>
</reference>
<proteinExistence type="evidence at transcript level"/>
<name>SBP1_XENTR</name>
<protein>
    <recommendedName>
        <fullName evidence="1">Methanethiol oxidase</fullName>
        <shortName evidence="1">MTO</shortName>
        <ecNumber evidence="1">1.8.3.4</ecNumber>
    </recommendedName>
    <alternativeName>
        <fullName>Selenium-binding protein 1</fullName>
    </alternativeName>
</protein>
<organism>
    <name type="scientific">Xenopus tropicalis</name>
    <name type="common">Western clawed frog</name>
    <name type="synonym">Silurana tropicalis</name>
    <dbReference type="NCBI Taxonomy" id="8364"/>
    <lineage>
        <taxon>Eukaryota</taxon>
        <taxon>Metazoa</taxon>
        <taxon>Chordata</taxon>
        <taxon>Craniata</taxon>
        <taxon>Vertebrata</taxon>
        <taxon>Euteleostomi</taxon>
        <taxon>Amphibia</taxon>
        <taxon>Batrachia</taxon>
        <taxon>Anura</taxon>
        <taxon>Pipoidea</taxon>
        <taxon>Pipidae</taxon>
        <taxon>Xenopodinae</taxon>
        <taxon>Xenopus</taxon>
        <taxon>Silurana</taxon>
    </lineage>
</organism>
<comment type="function">
    <text evidence="1 2">Catalyzes the oxidation of methanethiol, an organosulfur compound known to be produced in substantial amounts by gut bacteria (By similarity). Selenium-binding protein which may be involved in the sensing of reactive xenobiotics in the cytoplasm. May be involved in intra-Golgi protein transport (By similarity).</text>
</comment>
<comment type="catalytic activity">
    <reaction evidence="1">
        <text>methanethiol + O2 + H2O = hydrogen sulfide + formaldehyde + H2O2 + H(+)</text>
        <dbReference type="Rhea" id="RHEA:11812"/>
        <dbReference type="ChEBI" id="CHEBI:15377"/>
        <dbReference type="ChEBI" id="CHEBI:15378"/>
        <dbReference type="ChEBI" id="CHEBI:15379"/>
        <dbReference type="ChEBI" id="CHEBI:16007"/>
        <dbReference type="ChEBI" id="CHEBI:16240"/>
        <dbReference type="ChEBI" id="CHEBI:16842"/>
        <dbReference type="ChEBI" id="CHEBI:29919"/>
        <dbReference type="EC" id="1.8.3.4"/>
    </reaction>
</comment>
<comment type="pathway">
    <text evidence="1">Organosulfur degradation.</text>
</comment>
<comment type="subcellular location">
    <subcellularLocation>
        <location evidence="1">Nucleus</location>
    </subcellularLocation>
    <subcellularLocation>
        <location evidence="1">Cytoplasm</location>
        <location evidence="1">Cytosol</location>
    </subcellularLocation>
    <subcellularLocation>
        <location evidence="2">Membrane</location>
        <topology evidence="2">Peripheral membrane protein</topology>
    </subcellularLocation>
</comment>
<comment type="similarity">
    <text evidence="3">Belongs to the selenium-binding protein family.</text>
</comment>
<evidence type="ECO:0000250" key="1">
    <source>
        <dbReference type="UniProtKB" id="Q13228"/>
    </source>
</evidence>
<evidence type="ECO:0000250" key="2">
    <source>
        <dbReference type="UniProtKB" id="Q8VIF7"/>
    </source>
</evidence>
<evidence type="ECO:0000305" key="3"/>
<dbReference type="EC" id="1.8.3.4" evidence="1"/>
<dbReference type="EMBL" id="BC092556">
    <property type="protein sequence ID" value="AAH92556.1"/>
    <property type="molecule type" value="mRNA"/>
</dbReference>
<dbReference type="RefSeq" id="NP_001016750.1">
    <property type="nucleotide sequence ID" value="NM_001016750.3"/>
</dbReference>
<dbReference type="SMR" id="Q569D5"/>
<dbReference type="FunCoup" id="Q569D5">
    <property type="interactions" value="495"/>
</dbReference>
<dbReference type="STRING" id="8364.ENSXETP00000001428"/>
<dbReference type="PaxDb" id="8364-ENSXETP00000058307"/>
<dbReference type="GeneID" id="549504"/>
<dbReference type="KEGG" id="xtr:549504"/>
<dbReference type="AGR" id="Xenbase:XB-GENE-959074"/>
<dbReference type="CTD" id="8991"/>
<dbReference type="Xenbase" id="XB-GENE-959074">
    <property type="gene designation" value="selenbp1"/>
</dbReference>
<dbReference type="eggNOG" id="KOG0918">
    <property type="taxonomic scope" value="Eukaryota"/>
</dbReference>
<dbReference type="InParanoid" id="Q569D5"/>
<dbReference type="OMA" id="AYDFWWH"/>
<dbReference type="OrthoDB" id="10252446at2759"/>
<dbReference type="Proteomes" id="UP000008143">
    <property type="component" value="Chromosome 8"/>
</dbReference>
<dbReference type="Bgee" id="ENSXETG00000020722">
    <property type="expression patterns" value="Expressed in mesonephros and 16 other cell types or tissues"/>
</dbReference>
<dbReference type="ExpressionAtlas" id="Q569D5">
    <property type="expression patterns" value="baseline"/>
</dbReference>
<dbReference type="GO" id="GO:0005829">
    <property type="term" value="C:cytosol"/>
    <property type="evidence" value="ECO:0007669"/>
    <property type="project" value="UniProtKB-SubCell"/>
</dbReference>
<dbReference type="GO" id="GO:0016020">
    <property type="term" value="C:membrane"/>
    <property type="evidence" value="ECO:0007669"/>
    <property type="project" value="UniProtKB-SubCell"/>
</dbReference>
<dbReference type="GO" id="GO:0005634">
    <property type="term" value="C:nucleus"/>
    <property type="evidence" value="ECO:0007669"/>
    <property type="project" value="UniProtKB-SubCell"/>
</dbReference>
<dbReference type="GO" id="GO:0018549">
    <property type="term" value="F:methanethiol oxidase activity"/>
    <property type="evidence" value="ECO:0007669"/>
    <property type="project" value="UniProtKB-EC"/>
</dbReference>
<dbReference type="GO" id="GO:0008430">
    <property type="term" value="F:selenium binding"/>
    <property type="evidence" value="ECO:0007669"/>
    <property type="project" value="InterPro"/>
</dbReference>
<dbReference type="GO" id="GO:0015031">
    <property type="term" value="P:protein transport"/>
    <property type="evidence" value="ECO:0007669"/>
    <property type="project" value="UniProtKB-KW"/>
</dbReference>
<dbReference type="Gene3D" id="2.130.10.10">
    <property type="entry name" value="YVTN repeat-like/Quinoprotein amine dehydrogenase"/>
    <property type="match status" value="1"/>
</dbReference>
<dbReference type="InterPro" id="IPR008826">
    <property type="entry name" value="Se-bd"/>
</dbReference>
<dbReference type="InterPro" id="IPR015943">
    <property type="entry name" value="WD40/YVTN_repeat-like_dom_sf"/>
</dbReference>
<dbReference type="PANTHER" id="PTHR23300">
    <property type="entry name" value="METHANETHIOL OXIDASE"/>
    <property type="match status" value="1"/>
</dbReference>
<dbReference type="PANTHER" id="PTHR23300:SF0">
    <property type="entry name" value="METHANETHIOL OXIDASE"/>
    <property type="match status" value="1"/>
</dbReference>
<dbReference type="Pfam" id="PF05694">
    <property type="entry name" value="SBP56"/>
    <property type="match status" value="1"/>
</dbReference>
<dbReference type="SUPFAM" id="SSF75011">
    <property type="entry name" value="3-carboxy-cis,cis-mucoante lactonizing enzyme"/>
    <property type="match status" value="1"/>
</dbReference>